<proteinExistence type="inferred from homology"/>
<feature type="chain" id="PRO_0000073361" description="ATP synthase gamma chain">
    <location>
        <begin position="1"/>
        <end position="288"/>
    </location>
</feature>
<accession>Q4UK17</accession>
<sequence length="288" mass="33001">MSNLKQLRTRIKSVKSTQKITKAMQLVSASKMAKIKSQIANSNFYIEAISKMMSDILSIDMYELSIEEQKFFNTIPNKANLLIVMASQRGLCGTFNYSIIKQVKNDIKELENKGEQIKLIIIGKKGYEALKRQYANYIDSYFELPKIHDENLMLQVKQKIMSAVENLEVSNCVIYFNKFKNAMTQIMTRQQILPIEKYHDDSKVDDDYYEYEGENLISNLINLYVNSQINYALLQSRASEEGARMTAMENATNNANDLISKLVLKLNRSRQAIITTELIEIIAGSEAV</sequence>
<evidence type="ECO:0000255" key="1">
    <source>
        <dbReference type="HAMAP-Rule" id="MF_00815"/>
    </source>
</evidence>
<gene>
    <name evidence="1" type="primary">atpG</name>
    <name type="ordered locus">RF_1267</name>
</gene>
<name>ATPG_RICFE</name>
<organism>
    <name type="scientific">Rickettsia felis (strain ATCC VR-1525 / URRWXCal2)</name>
    <name type="common">Rickettsia azadi</name>
    <dbReference type="NCBI Taxonomy" id="315456"/>
    <lineage>
        <taxon>Bacteria</taxon>
        <taxon>Pseudomonadati</taxon>
        <taxon>Pseudomonadota</taxon>
        <taxon>Alphaproteobacteria</taxon>
        <taxon>Rickettsiales</taxon>
        <taxon>Rickettsiaceae</taxon>
        <taxon>Rickettsieae</taxon>
        <taxon>Rickettsia</taxon>
        <taxon>spotted fever group</taxon>
    </lineage>
</organism>
<reference key="1">
    <citation type="journal article" date="2005" name="PLoS Biol.">
        <title>The genome sequence of Rickettsia felis identifies the first putative conjugative plasmid in an obligate intracellular parasite.</title>
        <authorList>
            <person name="Ogata H."/>
            <person name="Renesto P."/>
            <person name="Audic S."/>
            <person name="Robert C."/>
            <person name="Blanc G."/>
            <person name="Fournier P.-E."/>
            <person name="Parinello H."/>
            <person name="Claverie J.-M."/>
            <person name="Raoult D."/>
        </authorList>
    </citation>
    <scope>NUCLEOTIDE SEQUENCE [LARGE SCALE GENOMIC DNA]</scope>
    <source>
        <strain>ATCC VR-1525 / URRWXCal2</strain>
    </source>
</reference>
<dbReference type="EMBL" id="CP000053">
    <property type="protein sequence ID" value="AAY62118.1"/>
    <property type="molecule type" value="Genomic_DNA"/>
</dbReference>
<dbReference type="SMR" id="Q4UK17"/>
<dbReference type="STRING" id="315456.RF_1267"/>
<dbReference type="KEGG" id="rfe:RF_1267"/>
<dbReference type="eggNOG" id="COG0224">
    <property type="taxonomic scope" value="Bacteria"/>
</dbReference>
<dbReference type="HOGENOM" id="CLU_050669_0_1_5"/>
<dbReference type="OrthoDB" id="9812769at2"/>
<dbReference type="Proteomes" id="UP000008548">
    <property type="component" value="Chromosome"/>
</dbReference>
<dbReference type="GO" id="GO:0005886">
    <property type="term" value="C:plasma membrane"/>
    <property type="evidence" value="ECO:0007669"/>
    <property type="project" value="UniProtKB-SubCell"/>
</dbReference>
<dbReference type="GO" id="GO:0045259">
    <property type="term" value="C:proton-transporting ATP synthase complex"/>
    <property type="evidence" value="ECO:0007669"/>
    <property type="project" value="UniProtKB-KW"/>
</dbReference>
<dbReference type="GO" id="GO:0005524">
    <property type="term" value="F:ATP binding"/>
    <property type="evidence" value="ECO:0007669"/>
    <property type="project" value="UniProtKB-UniRule"/>
</dbReference>
<dbReference type="GO" id="GO:0046933">
    <property type="term" value="F:proton-transporting ATP synthase activity, rotational mechanism"/>
    <property type="evidence" value="ECO:0007669"/>
    <property type="project" value="UniProtKB-UniRule"/>
</dbReference>
<dbReference type="GO" id="GO:0042777">
    <property type="term" value="P:proton motive force-driven plasma membrane ATP synthesis"/>
    <property type="evidence" value="ECO:0007669"/>
    <property type="project" value="UniProtKB-UniRule"/>
</dbReference>
<dbReference type="CDD" id="cd12151">
    <property type="entry name" value="F1-ATPase_gamma"/>
    <property type="match status" value="1"/>
</dbReference>
<dbReference type="Gene3D" id="3.40.1380.10">
    <property type="match status" value="1"/>
</dbReference>
<dbReference type="Gene3D" id="1.10.287.80">
    <property type="entry name" value="ATP synthase, gamma subunit, helix hairpin domain"/>
    <property type="match status" value="1"/>
</dbReference>
<dbReference type="HAMAP" id="MF_00815">
    <property type="entry name" value="ATP_synth_gamma_bact"/>
    <property type="match status" value="1"/>
</dbReference>
<dbReference type="InterPro" id="IPR035968">
    <property type="entry name" value="ATP_synth_F1_ATPase_gsu"/>
</dbReference>
<dbReference type="InterPro" id="IPR000131">
    <property type="entry name" value="ATP_synth_F1_gsu"/>
</dbReference>
<dbReference type="NCBIfam" id="TIGR01146">
    <property type="entry name" value="ATPsyn_F1gamma"/>
    <property type="match status" value="1"/>
</dbReference>
<dbReference type="PANTHER" id="PTHR11693">
    <property type="entry name" value="ATP SYNTHASE GAMMA CHAIN"/>
    <property type="match status" value="1"/>
</dbReference>
<dbReference type="PANTHER" id="PTHR11693:SF22">
    <property type="entry name" value="ATP SYNTHASE SUBUNIT GAMMA, MITOCHONDRIAL"/>
    <property type="match status" value="1"/>
</dbReference>
<dbReference type="Pfam" id="PF00231">
    <property type="entry name" value="ATP-synt"/>
    <property type="match status" value="1"/>
</dbReference>
<dbReference type="PRINTS" id="PR00126">
    <property type="entry name" value="ATPASEGAMMA"/>
</dbReference>
<dbReference type="SUPFAM" id="SSF52943">
    <property type="entry name" value="ATP synthase (F1-ATPase), gamma subunit"/>
    <property type="match status" value="1"/>
</dbReference>
<protein>
    <recommendedName>
        <fullName evidence="1">ATP synthase gamma chain</fullName>
    </recommendedName>
    <alternativeName>
        <fullName evidence="1">ATP synthase F1 sector gamma subunit</fullName>
    </alternativeName>
    <alternativeName>
        <fullName evidence="1">F-ATPase gamma subunit</fullName>
    </alternativeName>
</protein>
<comment type="function">
    <text evidence="1">Produces ATP from ADP in the presence of a proton gradient across the membrane. The gamma chain is believed to be important in regulating ATPase activity and the flow of protons through the CF(0) complex.</text>
</comment>
<comment type="subunit">
    <text evidence="1">F-type ATPases have 2 components, CF(1) - the catalytic core - and CF(0) - the membrane proton channel. CF(1) has five subunits: alpha(3), beta(3), gamma(1), delta(1), epsilon(1). CF(0) has three main subunits: a, b and c.</text>
</comment>
<comment type="subcellular location">
    <subcellularLocation>
        <location evidence="1">Cell inner membrane</location>
        <topology evidence="1">Peripheral membrane protein</topology>
    </subcellularLocation>
</comment>
<comment type="similarity">
    <text evidence="1">Belongs to the ATPase gamma chain family.</text>
</comment>
<keyword id="KW-0066">ATP synthesis</keyword>
<keyword id="KW-0997">Cell inner membrane</keyword>
<keyword id="KW-1003">Cell membrane</keyword>
<keyword id="KW-0139">CF(1)</keyword>
<keyword id="KW-0375">Hydrogen ion transport</keyword>
<keyword id="KW-0406">Ion transport</keyword>
<keyword id="KW-0472">Membrane</keyword>
<keyword id="KW-0813">Transport</keyword>